<feature type="chain" id="PRO_1000053263" description="ATP synthase gamma chain">
    <location>
        <begin position="1"/>
        <end position="309"/>
    </location>
</feature>
<gene>
    <name evidence="1" type="primary">atpG</name>
    <name type="ordered locus">Mvan_4329</name>
</gene>
<evidence type="ECO:0000255" key="1">
    <source>
        <dbReference type="HAMAP-Rule" id="MF_00815"/>
    </source>
</evidence>
<organism>
    <name type="scientific">Mycolicibacterium vanbaalenii (strain DSM 7251 / JCM 13017 / BCRC 16820 / KCTC 9966 / NRRL B-24157 / PYR-1)</name>
    <name type="common">Mycobacterium vanbaalenii</name>
    <dbReference type="NCBI Taxonomy" id="350058"/>
    <lineage>
        <taxon>Bacteria</taxon>
        <taxon>Bacillati</taxon>
        <taxon>Actinomycetota</taxon>
        <taxon>Actinomycetes</taxon>
        <taxon>Mycobacteriales</taxon>
        <taxon>Mycobacteriaceae</taxon>
        <taxon>Mycolicibacterium</taxon>
    </lineage>
</organism>
<keyword id="KW-0066">ATP synthesis</keyword>
<keyword id="KW-1003">Cell membrane</keyword>
<keyword id="KW-0139">CF(1)</keyword>
<keyword id="KW-0375">Hydrogen ion transport</keyword>
<keyword id="KW-0406">Ion transport</keyword>
<keyword id="KW-0472">Membrane</keyword>
<keyword id="KW-0813">Transport</keyword>
<accession>A1TD56</accession>
<proteinExistence type="inferred from homology"/>
<comment type="function">
    <text evidence="1">Produces ATP from ADP in the presence of a proton gradient across the membrane. The gamma chain is believed to be important in regulating ATPase activity and the flow of protons through the CF(0) complex.</text>
</comment>
<comment type="subunit">
    <text evidence="1">F-type ATPases have 2 components, CF(1) - the catalytic core - and CF(0) - the membrane proton channel. CF(1) has five subunits: alpha(3), beta(3), gamma(1), delta(1), epsilon(1). CF(0) has three main subunits: a, b and c.</text>
</comment>
<comment type="subcellular location">
    <subcellularLocation>
        <location evidence="1">Cell membrane</location>
        <topology evidence="1">Peripheral membrane protein</topology>
    </subcellularLocation>
</comment>
<comment type="similarity">
    <text evidence="1">Belongs to the ATPase gamma chain family.</text>
</comment>
<reference key="1">
    <citation type="submission" date="2006-12" db="EMBL/GenBank/DDBJ databases">
        <title>Complete sequence of Mycobacterium vanbaalenii PYR-1.</title>
        <authorList>
            <consortium name="US DOE Joint Genome Institute"/>
            <person name="Copeland A."/>
            <person name="Lucas S."/>
            <person name="Lapidus A."/>
            <person name="Barry K."/>
            <person name="Detter J.C."/>
            <person name="Glavina del Rio T."/>
            <person name="Hammon N."/>
            <person name="Israni S."/>
            <person name="Dalin E."/>
            <person name="Tice H."/>
            <person name="Pitluck S."/>
            <person name="Singan V."/>
            <person name="Schmutz J."/>
            <person name="Larimer F."/>
            <person name="Land M."/>
            <person name="Hauser L."/>
            <person name="Kyrpides N."/>
            <person name="Anderson I.J."/>
            <person name="Miller C."/>
            <person name="Richardson P."/>
        </authorList>
    </citation>
    <scope>NUCLEOTIDE SEQUENCE [LARGE SCALE GENOMIC DNA]</scope>
    <source>
        <strain>DSM 7251 / JCM 13017 / BCRC 16820 / KCTC 9966 / NRRL B-24157 / PYR-1</strain>
    </source>
</reference>
<name>ATPG_MYCVP</name>
<sequence>MAATLRELRGRIRSAGSIKKITKAQELIATSRIAKAQARVEAARPYSAEITSMLTELASASALDHPLLVARENPRRAAVLVVSSDRGLCGAYNANVLRQAEELFSLLREEGKEPVLYTVGRKALGYFSFRQREVVESWAGFSERPTYENAREIADTLVTAFMSGADDEGDDAGADGILGVDELHIVFTEFKSMLSQSAAARRIAPMVVEYVGDEQPEEGPQTLFSFEPDPETLFDALLPRYVATRVYAALLEAAASESASRRRAMKSATDNADDLIKALTLAANRERQAQITQEISEIVGGANALADAK</sequence>
<protein>
    <recommendedName>
        <fullName evidence="1">ATP synthase gamma chain</fullName>
    </recommendedName>
    <alternativeName>
        <fullName evidence="1">ATP synthase F1 sector gamma subunit</fullName>
    </alternativeName>
    <alternativeName>
        <fullName evidence="1">F-ATPase gamma subunit</fullName>
    </alternativeName>
</protein>
<dbReference type="EMBL" id="CP000511">
    <property type="protein sequence ID" value="ABM15106.1"/>
    <property type="molecule type" value="Genomic_DNA"/>
</dbReference>
<dbReference type="RefSeq" id="WP_011781484.1">
    <property type="nucleotide sequence ID" value="NZ_JACKSD010000061.1"/>
</dbReference>
<dbReference type="SMR" id="A1TD56"/>
<dbReference type="STRING" id="350058.Mvan_4329"/>
<dbReference type="KEGG" id="mva:Mvan_4329"/>
<dbReference type="eggNOG" id="COG0224">
    <property type="taxonomic scope" value="Bacteria"/>
</dbReference>
<dbReference type="HOGENOM" id="CLU_050669_0_0_11"/>
<dbReference type="Proteomes" id="UP000009159">
    <property type="component" value="Chromosome"/>
</dbReference>
<dbReference type="GO" id="GO:0005886">
    <property type="term" value="C:plasma membrane"/>
    <property type="evidence" value="ECO:0007669"/>
    <property type="project" value="UniProtKB-SubCell"/>
</dbReference>
<dbReference type="GO" id="GO:0045259">
    <property type="term" value="C:proton-transporting ATP synthase complex"/>
    <property type="evidence" value="ECO:0007669"/>
    <property type="project" value="UniProtKB-KW"/>
</dbReference>
<dbReference type="GO" id="GO:0005524">
    <property type="term" value="F:ATP binding"/>
    <property type="evidence" value="ECO:0007669"/>
    <property type="project" value="UniProtKB-UniRule"/>
</dbReference>
<dbReference type="GO" id="GO:0046933">
    <property type="term" value="F:proton-transporting ATP synthase activity, rotational mechanism"/>
    <property type="evidence" value="ECO:0007669"/>
    <property type="project" value="UniProtKB-UniRule"/>
</dbReference>
<dbReference type="GO" id="GO:0042777">
    <property type="term" value="P:proton motive force-driven plasma membrane ATP synthesis"/>
    <property type="evidence" value="ECO:0007669"/>
    <property type="project" value="UniProtKB-UniRule"/>
</dbReference>
<dbReference type="CDD" id="cd12151">
    <property type="entry name" value="F1-ATPase_gamma"/>
    <property type="match status" value="1"/>
</dbReference>
<dbReference type="Gene3D" id="3.40.1380.10">
    <property type="match status" value="1"/>
</dbReference>
<dbReference type="Gene3D" id="1.10.287.80">
    <property type="entry name" value="ATP synthase, gamma subunit, helix hairpin domain"/>
    <property type="match status" value="1"/>
</dbReference>
<dbReference type="HAMAP" id="MF_00815">
    <property type="entry name" value="ATP_synth_gamma_bact"/>
    <property type="match status" value="1"/>
</dbReference>
<dbReference type="InterPro" id="IPR035968">
    <property type="entry name" value="ATP_synth_F1_ATPase_gsu"/>
</dbReference>
<dbReference type="InterPro" id="IPR000131">
    <property type="entry name" value="ATP_synth_F1_gsu"/>
</dbReference>
<dbReference type="InterPro" id="IPR023632">
    <property type="entry name" value="ATP_synth_F1_gsu_CS"/>
</dbReference>
<dbReference type="NCBIfam" id="TIGR01146">
    <property type="entry name" value="ATPsyn_F1gamma"/>
    <property type="match status" value="1"/>
</dbReference>
<dbReference type="NCBIfam" id="NF004145">
    <property type="entry name" value="PRK05621.1-2"/>
    <property type="match status" value="1"/>
</dbReference>
<dbReference type="PANTHER" id="PTHR11693">
    <property type="entry name" value="ATP SYNTHASE GAMMA CHAIN"/>
    <property type="match status" value="1"/>
</dbReference>
<dbReference type="PANTHER" id="PTHR11693:SF22">
    <property type="entry name" value="ATP SYNTHASE SUBUNIT GAMMA, MITOCHONDRIAL"/>
    <property type="match status" value="1"/>
</dbReference>
<dbReference type="Pfam" id="PF00231">
    <property type="entry name" value="ATP-synt"/>
    <property type="match status" value="1"/>
</dbReference>
<dbReference type="PRINTS" id="PR00126">
    <property type="entry name" value="ATPASEGAMMA"/>
</dbReference>
<dbReference type="SUPFAM" id="SSF52943">
    <property type="entry name" value="ATP synthase (F1-ATPase), gamma subunit"/>
    <property type="match status" value="1"/>
</dbReference>
<dbReference type="PROSITE" id="PS00153">
    <property type="entry name" value="ATPASE_GAMMA"/>
    <property type="match status" value="1"/>
</dbReference>